<evidence type="ECO:0000250" key="1">
    <source>
        <dbReference type="UniProtKB" id="K7IM66"/>
    </source>
</evidence>
<evidence type="ECO:0000255" key="2">
    <source>
        <dbReference type="HAMAP-Rule" id="MF_03003"/>
    </source>
</evidence>
<evidence type="ECO:0000256" key="3">
    <source>
        <dbReference type="SAM" id="MobiDB-lite"/>
    </source>
</evidence>
<keyword id="KW-0963">Cytoplasm</keyword>
<keyword id="KW-0396">Initiation factor</keyword>
<keyword id="KW-0648">Protein biosynthesis</keyword>
<keyword id="KW-1185">Reference proteome</keyword>
<keyword id="KW-0694">RNA-binding</keyword>
<organism>
    <name type="scientific">Drosophila grimshawi</name>
    <name type="common">Hawaiian fruit fly</name>
    <name type="synonym">Idiomyia grimshawi</name>
    <dbReference type="NCBI Taxonomy" id="7222"/>
    <lineage>
        <taxon>Eukaryota</taxon>
        <taxon>Metazoa</taxon>
        <taxon>Ecdysozoa</taxon>
        <taxon>Arthropoda</taxon>
        <taxon>Hexapoda</taxon>
        <taxon>Insecta</taxon>
        <taxon>Pterygota</taxon>
        <taxon>Neoptera</taxon>
        <taxon>Endopterygota</taxon>
        <taxon>Diptera</taxon>
        <taxon>Brachycera</taxon>
        <taxon>Muscomorpha</taxon>
        <taxon>Ephydroidea</taxon>
        <taxon>Drosophilidae</taxon>
        <taxon>Drosophila</taxon>
        <taxon>Hawaiian Drosophila</taxon>
    </lineage>
</organism>
<proteinExistence type="inferred from homology"/>
<accession>B4JUM0</accession>
<sequence>MSQYAPFVKPYIEYNEFGWGPSDLPDLEVPYQPFCKGDRLGKISDWTTPVQERKYNNNKYMSTFGSSNSQYAYFHGNDDASFHLVNGNNMRALKPYQRNRYRPTQRNNLRLHGRNGRFNAAIGAGHGGAGAAGGAGASNKYGKGRDMRRGQTGRRFMRAAPVRQRQSSVVVRSDWVSIEEIDFPRLLKLTLPNIQEGADLITCGTLEFFDKQCDRINVKNERPLQKIDRIINVPGTIDDPIIRRLSKSLGNVFATDDIIATLMCCTRSNYSWDIVIDKVGTKLFLDKRDNAQFDMLTVNETALEPPLEEEGSINSPQSLSLEATIINHNFSQQVLKIGELEPKHKFDEPNPFEEPGVELASIGYRYKQWQLGDDMVLVARCKHNGVLRSPGGELQFLSIRALNEWDSKAANSVEWRQKLDSQRGAVLASELRNNACKLAKWTVEAVLAGSDQLKLGYVSRLNRKDHLHHVILGMQQFKPQEFATQINLNMDNAWGVLRCLVDIMLKQPDGKYLIMKDPNKPMIRLYDIPENAFDSDNNDGEETSDDRPFLNSKDNKL</sequence>
<protein>
    <recommendedName>
        <fullName evidence="2">Eukaryotic translation initiation factor 3 subunit D-2</fullName>
        <shortName evidence="2">eIF3d-2</shortName>
    </recommendedName>
    <alternativeName>
        <fullName evidence="2">Eukaryotic translation initiation factor 3 subunit 7-2</fullName>
    </alternativeName>
</protein>
<dbReference type="EMBL" id="CH916374">
    <property type="protein sequence ID" value="EDV91190.1"/>
    <property type="molecule type" value="Genomic_DNA"/>
</dbReference>
<dbReference type="SMR" id="B4JUM0"/>
<dbReference type="FunCoup" id="B4JUM0">
    <property type="interactions" value="1836"/>
</dbReference>
<dbReference type="STRING" id="7222.B4JUM0"/>
<dbReference type="EnsemblMetazoa" id="FBtr0150902">
    <property type="protein sequence ID" value="FBpp0149394"/>
    <property type="gene ID" value="FBgn0122960"/>
</dbReference>
<dbReference type="EnsemblMetazoa" id="XM_001994525.3">
    <property type="protein sequence ID" value="XP_001994561.1"/>
    <property type="gene ID" value="LOC6568607"/>
</dbReference>
<dbReference type="GeneID" id="6568607"/>
<dbReference type="KEGG" id="dgr:6568607"/>
<dbReference type="CTD" id="41475"/>
<dbReference type="eggNOG" id="KOG2479">
    <property type="taxonomic scope" value="Eukaryota"/>
</dbReference>
<dbReference type="HOGENOM" id="CLU_024521_2_0_1"/>
<dbReference type="InParanoid" id="B4JUM0"/>
<dbReference type="OMA" id="IEYNEFG"/>
<dbReference type="OrthoDB" id="16538at2759"/>
<dbReference type="PhylomeDB" id="B4JUM0"/>
<dbReference type="Proteomes" id="UP000001070">
    <property type="component" value="Unassembled WGS sequence"/>
</dbReference>
<dbReference type="GO" id="GO:0016282">
    <property type="term" value="C:eukaryotic 43S preinitiation complex"/>
    <property type="evidence" value="ECO:0007669"/>
    <property type="project" value="UniProtKB-UniRule"/>
</dbReference>
<dbReference type="GO" id="GO:0033290">
    <property type="term" value="C:eukaryotic 48S preinitiation complex"/>
    <property type="evidence" value="ECO:0007669"/>
    <property type="project" value="UniProtKB-UniRule"/>
</dbReference>
<dbReference type="GO" id="GO:0005852">
    <property type="term" value="C:eukaryotic translation initiation factor 3 complex"/>
    <property type="evidence" value="ECO:0000250"/>
    <property type="project" value="UniProtKB"/>
</dbReference>
<dbReference type="GO" id="GO:0098808">
    <property type="term" value="F:mRNA cap binding"/>
    <property type="evidence" value="ECO:0007669"/>
    <property type="project" value="UniProtKB-UniRule"/>
</dbReference>
<dbReference type="GO" id="GO:0003743">
    <property type="term" value="F:translation initiation factor activity"/>
    <property type="evidence" value="ECO:0000250"/>
    <property type="project" value="UniProtKB"/>
</dbReference>
<dbReference type="GO" id="GO:0002191">
    <property type="term" value="P:cap-dependent translational initiation"/>
    <property type="evidence" value="ECO:0007669"/>
    <property type="project" value="UniProtKB-UniRule"/>
</dbReference>
<dbReference type="GO" id="GO:0001732">
    <property type="term" value="P:formation of cytoplasmic translation initiation complex"/>
    <property type="evidence" value="ECO:0007669"/>
    <property type="project" value="UniProtKB-UniRule"/>
</dbReference>
<dbReference type="GO" id="GO:0006446">
    <property type="term" value="P:regulation of translational initiation"/>
    <property type="evidence" value="ECO:0000250"/>
    <property type="project" value="UniProtKB"/>
</dbReference>
<dbReference type="HAMAP" id="MF_03003">
    <property type="entry name" value="eIF3d"/>
    <property type="match status" value="1"/>
</dbReference>
<dbReference type="InterPro" id="IPR007783">
    <property type="entry name" value="eIF3d"/>
</dbReference>
<dbReference type="PANTHER" id="PTHR12399">
    <property type="entry name" value="EUKARYOTIC TRANSLATION INITIATION FACTOR 3 SUBUNIT 7"/>
    <property type="match status" value="1"/>
</dbReference>
<dbReference type="PANTHER" id="PTHR12399:SF0">
    <property type="entry name" value="EUKARYOTIC TRANSLATION INITIATION FACTOR 3 SUBUNIT D"/>
    <property type="match status" value="1"/>
</dbReference>
<dbReference type="Pfam" id="PF05091">
    <property type="entry name" value="eIF-3_zeta"/>
    <property type="match status" value="1"/>
</dbReference>
<dbReference type="PIRSF" id="PIRSF016281">
    <property type="entry name" value="EIF-3_zeta"/>
    <property type="match status" value="1"/>
</dbReference>
<feature type="chain" id="PRO_0000364147" description="Eukaryotic translation initiation factor 3 subunit D-2">
    <location>
        <begin position="1"/>
        <end position="557"/>
    </location>
</feature>
<feature type="region of interest" description="RNA gate" evidence="1">
    <location>
        <begin position="292"/>
        <end position="306"/>
    </location>
</feature>
<feature type="region of interest" description="Disordered" evidence="3">
    <location>
        <begin position="533"/>
        <end position="557"/>
    </location>
</feature>
<feature type="compositionally biased region" description="Basic and acidic residues" evidence="3">
    <location>
        <begin position="545"/>
        <end position="557"/>
    </location>
</feature>
<comment type="function">
    <text evidence="2">mRNA cap-binding component of the eukaryotic translation initiation factor 3 (eIF-3) complex, which is involved in protein synthesis of a specialized repertoire of mRNAs and, together with other initiation factors, stimulates binding of mRNA and methionyl-tRNAi to the 40S ribosome. The eIF-3 complex specifically targets and initiates translation of a subset of mRNAs involved in cell proliferation. In the eIF-3 complex, eif3d specifically recognizes and binds the 7-methylguanosine cap of a subset of mRNAs.</text>
</comment>
<comment type="subunit">
    <text evidence="2">Component of the eukaryotic translation initiation factor 3 (eIF-3) complex. The eIF-3 complex interacts with pix.</text>
</comment>
<comment type="subcellular location">
    <subcellularLocation>
        <location evidence="2">Cytoplasm</location>
    </subcellularLocation>
</comment>
<comment type="domain">
    <text evidence="2">The RNA gate region regulates mRNA cap recognition to prevent promiscuous mRNA-binding before assembly of eif3d into the full eukaryotic translation initiation factor 3 (eIF-3) complex.</text>
</comment>
<comment type="similarity">
    <text evidence="2">Belongs to the eIF-3 subunit D family.</text>
</comment>
<reference key="1">
    <citation type="journal article" date="2007" name="Nature">
        <title>Evolution of genes and genomes on the Drosophila phylogeny.</title>
        <authorList>
            <consortium name="Drosophila 12 genomes consortium"/>
        </authorList>
    </citation>
    <scope>NUCLEOTIDE SEQUENCE [LARGE SCALE GENOMIC DNA]</scope>
    <source>
        <strain>Tucson 15287-2541.00</strain>
    </source>
</reference>
<gene>
    <name evidence="2" type="primary">eIF3d2</name>
    <name evidence="2" type="synonym">eIF3-S7-2</name>
    <name type="ORF">GH15488</name>
</gene>
<name>EI3D2_DROGR</name>